<feature type="signal peptide" evidence="4">
    <location>
        <begin position="1"/>
        <end position="26"/>
    </location>
</feature>
<feature type="chain" id="PRO_0000423488" description="L-cysteine S-thiosulfotransferase subunit SoxA" evidence="4">
    <location>
        <begin position="27"/>
        <end position="290"/>
    </location>
</feature>
<feature type="domain" description="Cytochrome c" evidence="3">
    <location>
        <begin position="78"/>
        <end position="171"/>
    </location>
</feature>
<feature type="active site" description="Cysteine persulfide intermediate" evidence="5">
    <location>
        <position position="251"/>
    </location>
</feature>
<feature type="binding site" evidence="5">
    <location>
        <position position="78"/>
    </location>
    <ligand>
        <name>Zn(2+)</name>
        <dbReference type="ChEBI" id="CHEBI:29105"/>
        <label>1</label>
    </ligand>
</feature>
<feature type="binding site" evidence="5">
    <location>
        <position position="81"/>
    </location>
    <ligand>
        <name>Zn(2+)</name>
        <dbReference type="ChEBI" id="CHEBI:29105"/>
        <label>1</label>
    </ligand>
</feature>
<feature type="binding site" description="covalent" evidence="3 5">
    <location>
        <position position="106"/>
    </location>
    <ligand>
        <name>heme c</name>
        <dbReference type="ChEBI" id="CHEBI:61717"/>
        <label>1</label>
    </ligand>
</feature>
<feature type="binding site" description="covalent" evidence="3 5">
    <location>
        <position position="109"/>
    </location>
    <ligand>
        <name>heme c</name>
        <dbReference type="ChEBI" id="CHEBI:61717"/>
        <label>1</label>
    </ligand>
</feature>
<feature type="binding site" description="axial binding residue" evidence="3 5">
    <location>
        <position position="110"/>
    </location>
    <ligand>
        <name>heme c</name>
        <dbReference type="ChEBI" id="CHEBI:61717"/>
        <label>1</label>
    </ligand>
    <ligandPart>
        <name>Fe</name>
        <dbReference type="ChEBI" id="CHEBI:18248"/>
    </ligandPart>
</feature>
<feature type="binding site" description="axial binding residue" evidence="3 5">
    <location>
        <position position="143"/>
    </location>
    <ligand>
        <name>heme c</name>
        <dbReference type="ChEBI" id="CHEBI:61717"/>
        <label>1</label>
    </ligand>
    <ligandPart>
        <name>Fe</name>
        <dbReference type="ChEBI" id="CHEBI:18248"/>
    </ligandPart>
</feature>
<feature type="binding site" evidence="5">
    <location>
        <position position="190"/>
    </location>
    <ligand>
        <name>Zn(2+)</name>
        <dbReference type="ChEBI" id="CHEBI:29105"/>
        <label>2</label>
    </ligand>
</feature>
<feature type="binding site" description="covalent" evidence="3 5">
    <location>
        <position position="206"/>
    </location>
    <ligand>
        <name>heme c</name>
        <dbReference type="ChEBI" id="CHEBI:61717"/>
        <label>2</label>
    </ligand>
</feature>
<feature type="binding site" description="covalent" evidence="1 3">
    <location>
        <position position="209"/>
    </location>
    <ligand>
        <name>heme c</name>
        <dbReference type="ChEBI" id="CHEBI:61717"/>
        <label>2</label>
    </ligand>
</feature>
<feature type="binding site" description="axial binding residue" evidence="3 5">
    <location>
        <position position="210"/>
    </location>
    <ligand>
        <name>heme c</name>
        <dbReference type="ChEBI" id="CHEBI:61717"/>
        <label>2</label>
    </ligand>
    <ligandPart>
        <name>Fe</name>
        <dbReference type="ChEBI" id="CHEBI:18248"/>
    </ligandPart>
</feature>
<feature type="binding site" evidence="1">
    <location>
        <position position="247"/>
    </location>
    <ligand>
        <name>substrate</name>
    </ligand>
</feature>
<feature type="binding site" description="axial binding residue" evidence="3 5">
    <location>
        <position position="251"/>
    </location>
    <ligand>
        <name>heme c</name>
        <dbReference type="ChEBI" id="CHEBI:61717"/>
        <label>2</label>
    </ligand>
    <ligandPart>
        <name>Fe</name>
        <dbReference type="ChEBI" id="CHEBI:18248"/>
    </ligandPart>
</feature>
<feature type="binding site" evidence="5">
    <location>
        <position position="266"/>
    </location>
    <ligand>
        <name>Zn(2+)</name>
        <dbReference type="ChEBI" id="CHEBI:29105"/>
        <label>2</label>
    </ligand>
</feature>
<feature type="strand" evidence="14">
    <location>
        <begin position="33"/>
        <end position="36"/>
    </location>
</feature>
<feature type="strand" evidence="14">
    <location>
        <begin position="42"/>
        <end position="44"/>
    </location>
</feature>
<feature type="helix" evidence="14">
    <location>
        <begin position="52"/>
        <end position="54"/>
    </location>
</feature>
<feature type="turn" evidence="14">
    <location>
        <begin position="55"/>
        <end position="57"/>
    </location>
</feature>
<feature type="helix" evidence="14">
    <location>
        <begin position="64"/>
        <end position="67"/>
    </location>
</feature>
<feature type="helix" evidence="14">
    <location>
        <begin position="70"/>
        <end position="74"/>
    </location>
</feature>
<feature type="turn" evidence="14">
    <location>
        <begin position="79"/>
        <end position="81"/>
    </location>
</feature>
<feature type="helix" evidence="14">
    <location>
        <begin position="85"/>
        <end position="96"/>
    </location>
</feature>
<feature type="helix" evidence="14">
    <location>
        <begin position="106"/>
        <end position="110"/>
    </location>
</feature>
<feature type="helix" evidence="14">
    <location>
        <begin position="113"/>
        <end position="116"/>
    </location>
</feature>
<feature type="turn" evidence="14">
    <location>
        <begin position="117"/>
        <end position="119"/>
    </location>
</feature>
<feature type="helix" evidence="14">
    <location>
        <begin position="120"/>
        <end position="122"/>
    </location>
</feature>
<feature type="strand" evidence="14">
    <location>
        <begin position="124"/>
        <end position="126"/>
    </location>
</feature>
<feature type="turn" evidence="14">
    <location>
        <begin position="128"/>
        <end position="130"/>
    </location>
</feature>
<feature type="helix" evidence="14">
    <location>
        <begin position="136"/>
        <end position="148"/>
    </location>
</feature>
<feature type="helix" evidence="14">
    <location>
        <begin position="158"/>
        <end position="169"/>
    </location>
</feature>
<feature type="turn" evidence="14">
    <location>
        <begin position="170"/>
        <end position="173"/>
    </location>
</feature>
<feature type="helix" evidence="14">
    <location>
        <begin position="182"/>
        <end position="184"/>
    </location>
</feature>
<feature type="helix" evidence="14">
    <location>
        <begin position="185"/>
        <end position="196"/>
    </location>
</feature>
<feature type="turn" evidence="14">
    <location>
        <begin position="200"/>
        <end position="203"/>
    </location>
</feature>
<feature type="helix" evidence="14">
    <location>
        <begin position="206"/>
        <end position="210"/>
    </location>
</feature>
<feature type="strand" evidence="14">
    <location>
        <begin position="216"/>
        <end position="218"/>
    </location>
</feature>
<feature type="strand" evidence="14">
    <location>
        <begin position="232"/>
        <end position="235"/>
    </location>
</feature>
<feature type="turn" evidence="14">
    <location>
        <begin position="236"/>
        <end position="239"/>
    </location>
</feature>
<feature type="strand" evidence="14">
    <location>
        <begin position="240"/>
        <end position="242"/>
    </location>
</feature>
<feature type="helix" evidence="14">
    <location>
        <begin position="244"/>
        <end position="253"/>
    </location>
</feature>
<feature type="turn" evidence="14">
    <location>
        <begin position="254"/>
        <end position="256"/>
    </location>
</feature>
<feature type="helix" evidence="14">
    <location>
        <begin position="265"/>
        <end position="277"/>
    </location>
</feature>
<feature type="turn" evidence="14">
    <location>
        <begin position="278"/>
        <end position="280"/>
    </location>
</feature>
<feature type="strand" evidence="14">
    <location>
        <begin position="285"/>
        <end position="289"/>
    </location>
</feature>
<sequence length="290" mass="31748">MPRFTKTKGTLAATALGLALAGAAFADPVEDGLVIETDSGPVEIVTKTAPPAFLADTFDTIYSGWHFRDDSTRDLERDDFDNPAMVFVDRGLDKWNAAMGVNGESCASCHQGPESMAGLRAVMPRVDEHTGKLMIMEDYVNACVTERMGLEKWGVTSDNMKDMLSLISLQSRGMAVNVKIDGPAAPYWEHGKEIYYTRYGQLEMSCANCHEDNAGNMIRADHLSQGQINGFPTYRLKDSGMVTAQHRFVGCVRDTRAETFKAGSDDFKALELYVASRGNGLSVEGVSVRH</sequence>
<keyword id="KW-0002">3D-structure</keyword>
<keyword id="KW-0903">Direct protein sequencing</keyword>
<keyword id="KW-0249">Electron transport</keyword>
<keyword id="KW-0349">Heme</keyword>
<keyword id="KW-0408">Iron</keyword>
<keyword id="KW-0479">Metal-binding</keyword>
<keyword id="KW-0574">Periplasm</keyword>
<keyword id="KW-0732">Signal</keyword>
<keyword id="KW-0808">Transferase</keyword>
<keyword id="KW-0813">Transport</keyword>
<keyword id="KW-0862">Zinc</keyword>
<reference evidence="10" key="1">
    <citation type="journal article" date="2000" name="J. Bacteriol.">
        <title>Novel genes coding for lithotrophic sulfur oxidation of Paracoccus pantotrophus GB17.</title>
        <authorList>
            <person name="Friedrich C.G."/>
            <person name="Quentmeier A."/>
            <person name="Bardischewsky F."/>
            <person name="Rother D."/>
            <person name="Kraft R."/>
            <person name="Kostka S."/>
            <person name="Prinz H."/>
        </authorList>
    </citation>
    <scope>NUCLEOTIDE SEQUENCE [GENOMIC DNA]</scope>
    <scope>PROTEIN SEQUENCE OF 27-50; 59-69; 181-188 AND 212-220</scope>
    <scope>FUNCTION</scope>
    <scope>CATALYTIC ACTIVITY</scope>
    <scope>COFACTOR</scope>
    <scope>BIOPHYSICOCHEMICAL PROPERTIES</scope>
    <scope>SUBUNIT</scope>
    <scope>SUBCELLULAR LOCATION</scope>
    <scope>MASS SPECTROMETRY</scope>
    <scope>SIGNAL</scope>
    <source>
        <strain>ATCC 35512 / DSM 2944 / CIP 106514 / LMD 82.5 / NBRC 102493 / NCCB 82005 / GB17</strain>
    </source>
</reference>
<reference evidence="10" key="2">
    <citation type="journal article" date="2007" name="Biochemistry">
        <title>The unusal redox centers of SoxXA, a novel c-type heme-enzyme essential for chemotrophic sulfur-oxidation of Paracoccus pantotrophus.</title>
        <authorList>
            <person name="Reijerse E.J."/>
            <person name="Sommerhalter M."/>
            <person name="Hellwig P."/>
            <person name="Quentmeier A."/>
            <person name="Rother D."/>
            <person name="Laurich C."/>
            <person name="Bothe E."/>
            <person name="Lubitz W."/>
            <person name="Friedrich C.G."/>
        </authorList>
    </citation>
    <scope>FUNCTION</scope>
    <scope>COFACTOR</scope>
    <scope>BIOPHYSICOCHEMICAL PROPERTIES</scope>
    <scope>SUBUNIT</scope>
    <scope>POTENTIOMETRIC TITRATION AND EPR SPECTROSCOPY OF THE SOXAX COMPLEX</scope>
    <source>
        <strain>ATCC 35512 / DSM 2944 / CIP 106514 / LMD 82.5 / NBRC 102493 / NCCB 82005 / GB17</strain>
    </source>
</reference>
<reference evidence="10 13" key="3">
    <citation type="journal article" date="2005" name="J. Struct. Biol.">
        <title>Structure of the cytochrome complex SoxXA of Paracoccus pantotrophus, a heme enzyme initiating chemotrophic sulfur oxidation.</title>
        <authorList>
            <person name="Dambe T."/>
            <person name="Quentmeier A."/>
            <person name="Rother D."/>
            <person name="Friedrich C."/>
            <person name="Scheidig A.J."/>
        </authorList>
    </citation>
    <scope>X-RAY CRYSTALLOGRAPHY (1.92 ANGSTROMS) OF 27-290 IN COMPLEX WITH HEME; ZINC AND SOXX</scope>
    <scope>FUNCTION</scope>
    <scope>COFACTOR</scope>
    <scope>SUBUNIT</scope>
    <scope>ACTIVE SITE</scope>
    <scope>CYSTEINE PERSULFIDE AT CYS-251</scope>
    <source>
        <strain>ATCC 35512 / DSM 2944 / CIP 106514 / LMD 82.5 / NBRC 102493 / NCCB 82005 / GB17</strain>
    </source>
</reference>
<accession>O33434</accession>
<organism>
    <name type="scientific">Paracoccus pantotrophus</name>
    <name type="common">Thiosphaera pantotropha</name>
    <dbReference type="NCBI Taxonomy" id="82367"/>
    <lineage>
        <taxon>Bacteria</taxon>
        <taxon>Pseudomonadati</taxon>
        <taxon>Pseudomonadota</taxon>
        <taxon>Alphaproteobacteria</taxon>
        <taxon>Rhodobacterales</taxon>
        <taxon>Paracoccaceae</taxon>
        <taxon>Paracoccus</taxon>
    </lineage>
</organism>
<name>SOXA_PARPN</name>
<comment type="function">
    <text evidence="4 5 6">C-type diheme cytochrome, which is part of the SoxAX cytochrome complex involved in sulfur oxidation. The SoxAX complex catalyzes the formation of a heterodisulfide bond between the conserved cysteine residue on a sulfur carrier SoxYZ complex subunit SoxY and thiosulfate or other inorganic sulfur substrates. This leads to the liberation of two electrons, which may be transferred from the SoxAX complex to another cytochrome c that then channels them into the respiratory electron transport chain. Some electrons may be used for reductive CO(2) fixation.</text>
</comment>
<comment type="catalytic activity">
    <reaction evidence="4">
        <text>L-cysteinyl-[SoxY protein] + thiosulfate + 2 Fe(III)-[cytochrome c] = S-sulfosulfanyl-L-cysteinyl-[SoxY protein] + 2 Fe(II)-[cytochrome c] + 2 H(+)</text>
        <dbReference type="Rhea" id="RHEA:56720"/>
        <dbReference type="Rhea" id="RHEA-COMP:10350"/>
        <dbReference type="Rhea" id="RHEA-COMP:14328"/>
        <dbReference type="Rhea" id="RHEA-COMP:14399"/>
        <dbReference type="Rhea" id="RHEA-COMP:14691"/>
        <dbReference type="ChEBI" id="CHEBI:15378"/>
        <dbReference type="ChEBI" id="CHEBI:29033"/>
        <dbReference type="ChEBI" id="CHEBI:29034"/>
        <dbReference type="ChEBI" id="CHEBI:29950"/>
        <dbReference type="ChEBI" id="CHEBI:33542"/>
        <dbReference type="ChEBI" id="CHEBI:139321"/>
        <dbReference type="EC" id="2.8.5.2"/>
    </reaction>
</comment>
<comment type="catalytic activity">
    <reaction evidence="4">
        <text>S-sulfanyl-L-cysteinyl-[SoxY protein] + thiosulfate + 2 Fe(III)-[cytochrome c] = S-(2-sulfodisulfanyl)-L-cysteinyl-[SoxY protein] + 2 Fe(II)-[cytochrome c] + 2 H(+)</text>
        <dbReference type="Rhea" id="RHEA:51224"/>
        <dbReference type="Rhea" id="RHEA-COMP:10350"/>
        <dbReference type="Rhea" id="RHEA-COMP:14399"/>
        <dbReference type="Rhea" id="RHEA-COMP:14689"/>
        <dbReference type="Rhea" id="RHEA-COMP:14690"/>
        <dbReference type="ChEBI" id="CHEBI:15378"/>
        <dbReference type="ChEBI" id="CHEBI:29033"/>
        <dbReference type="ChEBI" id="CHEBI:29034"/>
        <dbReference type="ChEBI" id="CHEBI:33542"/>
        <dbReference type="ChEBI" id="CHEBI:61963"/>
        <dbReference type="ChEBI" id="CHEBI:140664"/>
        <dbReference type="EC" id="2.8.5.2"/>
    </reaction>
</comment>
<comment type="cofactor">
    <cofactor evidence="4 5 6">
        <name>heme c</name>
        <dbReference type="ChEBI" id="CHEBI:61717"/>
    </cofactor>
    <text evidence="4 5 6">Binds 2 heme c groups covalently per subunit.</text>
</comment>
<comment type="cofactor">
    <cofactor evidence="5">
        <name>Zn(2+)</name>
        <dbReference type="ChEBI" id="CHEBI:29105"/>
    </cofactor>
    <text evidence="5">Binds 2 Zn(2+) ions per subunit.</text>
</comment>
<comment type="biophysicochemical properties">
    <kinetics>
        <KM evidence="4 6">0.034 uM for thiosulfate using purified SoxAX complex (at pH 7.5)</KM>
    </kinetics>
    <redoxPotential>
        <text evidence="4 6">E(0) is -432 for heme 2 at pH 7.0. This transition depends on pH by approximately -45 mV/pH unit.</text>
    </redoxPotential>
</comment>
<comment type="subunit">
    <text evidence="4 5 6">Heterodimer of SoxA and SoxX.</text>
</comment>
<comment type="subcellular location">
    <subcellularLocation>
        <location evidence="4 11">Periplasm</location>
    </subcellularLocation>
</comment>
<comment type="PTM">
    <text evidence="5">Cysteine persulfide at Cys-251.</text>
</comment>
<comment type="mass spectrometry" mass="30452.0" method="Electrospray" evidence="4">
    <text>The measured mass is that of mature SoxA with a diheme bound.</text>
</comment>
<comment type="similarity">
    <text evidence="2">Belongs to the SoxA family.</text>
</comment>
<proteinExistence type="evidence at protein level"/>
<protein>
    <recommendedName>
        <fullName evidence="10">L-cysteine S-thiosulfotransferase subunit SoxA</fullName>
        <ecNumber evidence="4">2.8.5.2</ecNumber>
    </recommendedName>
    <alternativeName>
        <fullName evidence="1">Cytochrome c551 subunit diheme</fullName>
    </alternativeName>
    <alternativeName>
        <fullName evidence="12">Protein SoxA</fullName>
    </alternativeName>
    <alternativeName>
        <fullName evidence="7 8 9">SoxAX cytochrome complex subunit A</fullName>
    </alternativeName>
    <alternativeName>
        <fullName evidence="8 9">Sulfur oxidizing protein A</fullName>
    </alternativeName>
    <alternativeName>
        <fullName evidence="1 7">Thiosulfate-oxidizing multienzyme system protein SoxA</fullName>
        <shortName evidence="1">TOMES protein SoxA</shortName>
    </alternativeName>
</protein>
<evidence type="ECO:0000250" key="1">
    <source>
        <dbReference type="UniProtKB" id="Q939U1"/>
    </source>
</evidence>
<evidence type="ECO:0000255" key="2"/>
<evidence type="ECO:0000255" key="3">
    <source>
        <dbReference type="PROSITE-ProRule" id="PRU00433"/>
    </source>
</evidence>
<evidence type="ECO:0000269" key="4">
    <source>
    </source>
</evidence>
<evidence type="ECO:0000269" key="5">
    <source>
    </source>
</evidence>
<evidence type="ECO:0000269" key="6">
    <source>
    </source>
</evidence>
<evidence type="ECO:0000303" key="7">
    <source>
    </source>
</evidence>
<evidence type="ECO:0000303" key="8">
    <source>
    </source>
</evidence>
<evidence type="ECO:0000303" key="9">
    <source>
    </source>
</evidence>
<evidence type="ECO:0000305" key="10"/>
<evidence type="ECO:0000305" key="11">
    <source>
    </source>
</evidence>
<evidence type="ECO:0000312" key="12">
    <source>
        <dbReference type="EMBL" id="CAA55827.2"/>
    </source>
</evidence>
<evidence type="ECO:0000312" key="13">
    <source>
        <dbReference type="PDB" id="2C1D"/>
    </source>
</evidence>
<evidence type="ECO:0007829" key="14">
    <source>
        <dbReference type="PDB" id="2C1D"/>
    </source>
</evidence>
<gene>
    <name evidence="12" type="primary">soxA</name>
</gene>
<dbReference type="EC" id="2.8.5.2" evidence="4"/>
<dbReference type="EMBL" id="X79242">
    <property type="protein sequence ID" value="CAA55827.2"/>
    <property type="molecule type" value="Genomic_DNA"/>
</dbReference>
<dbReference type="PIR" id="T46963">
    <property type="entry name" value="T46963"/>
</dbReference>
<dbReference type="RefSeq" id="WP_024845877.1">
    <property type="nucleotide sequence ID" value="NZ_CP038206.1"/>
</dbReference>
<dbReference type="PDB" id="2C1D">
    <property type="method" value="X-ray"/>
    <property type="resolution" value="1.92 A"/>
    <property type="chains" value="A/C/E/G=27-290"/>
</dbReference>
<dbReference type="PDBsum" id="2C1D"/>
<dbReference type="SMR" id="O33434"/>
<dbReference type="STRING" id="82367.SAMN04244567_02463"/>
<dbReference type="GeneID" id="51369589"/>
<dbReference type="KEGG" id="ag:CAA55827"/>
<dbReference type="eggNOG" id="COG3258">
    <property type="taxonomic scope" value="Bacteria"/>
</dbReference>
<dbReference type="OrthoDB" id="7916986at2"/>
<dbReference type="BioCyc" id="MetaCyc:SOXADENIT-MONOMER"/>
<dbReference type="BRENDA" id="2.8.5.2">
    <property type="organism ID" value="4531"/>
</dbReference>
<dbReference type="EvolutionaryTrace" id="O33434"/>
<dbReference type="GO" id="GO:0070069">
    <property type="term" value="C:cytochrome complex"/>
    <property type="evidence" value="ECO:0000314"/>
    <property type="project" value="UniProtKB"/>
</dbReference>
<dbReference type="GO" id="GO:0042597">
    <property type="term" value="C:periplasmic space"/>
    <property type="evidence" value="ECO:0000314"/>
    <property type="project" value="UniProtKB"/>
</dbReference>
<dbReference type="GO" id="GO:0009055">
    <property type="term" value="F:electron transfer activity"/>
    <property type="evidence" value="ECO:0000314"/>
    <property type="project" value="UniProtKB"/>
</dbReference>
<dbReference type="GO" id="GO:0020037">
    <property type="term" value="F:heme binding"/>
    <property type="evidence" value="ECO:0000314"/>
    <property type="project" value="UniProtKB"/>
</dbReference>
<dbReference type="GO" id="GO:0005506">
    <property type="term" value="F:iron ion binding"/>
    <property type="evidence" value="ECO:0000314"/>
    <property type="project" value="UniProtKB"/>
</dbReference>
<dbReference type="GO" id="GO:0046872">
    <property type="term" value="F:metal ion binding"/>
    <property type="evidence" value="ECO:0000314"/>
    <property type="project" value="UniProtKB"/>
</dbReference>
<dbReference type="GO" id="GO:0016491">
    <property type="term" value="F:oxidoreductase activity"/>
    <property type="evidence" value="ECO:0000314"/>
    <property type="project" value="UniProtKB"/>
</dbReference>
<dbReference type="GO" id="GO:0016669">
    <property type="term" value="F:oxidoreductase activity, acting on a sulfur group of donors, cytochrome as acceptor"/>
    <property type="evidence" value="ECO:0000314"/>
    <property type="project" value="UniProtKB"/>
</dbReference>
<dbReference type="GO" id="GO:0046982">
    <property type="term" value="F:protein heterodimerization activity"/>
    <property type="evidence" value="ECO:0000314"/>
    <property type="project" value="UniProtKB"/>
</dbReference>
<dbReference type="GO" id="GO:0016783">
    <property type="term" value="F:sulfurtransferase activity"/>
    <property type="evidence" value="ECO:0000314"/>
    <property type="project" value="UniProtKB"/>
</dbReference>
<dbReference type="GO" id="GO:0004792">
    <property type="term" value="F:thiosulfate-cyanide sulfurtransferase activity"/>
    <property type="evidence" value="ECO:0000314"/>
    <property type="project" value="UniProtKB"/>
</dbReference>
<dbReference type="GO" id="GO:0008270">
    <property type="term" value="F:zinc ion binding"/>
    <property type="evidence" value="ECO:0000314"/>
    <property type="project" value="UniProtKB"/>
</dbReference>
<dbReference type="GO" id="GO:0019417">
    <property type="term" value="P:sulfur oxidation"/>
    <property type="evidence" value="ECO:0000314"/>
    <property type="project" value="UniProtKB"/>
</dbReference>
<dbReference type="FunFam" id="1.10.760.10:FF:000030">
    <property type="entry name" value="L-cysteine S-thiosulfotransferase subunit SoxA"/>
    <property type="match status" value="1"/>
</dbReference>
<dbReference type="Gene3D" id="1.10.760.10">
    <property type="entry name" value="Cytochrome c-like domain"/>
    <property type="match status" value="2"/>
</dbReference>
<dbReference type="InterPro" id="IPR009056">
    <property type="entry name" value="Cyt_c-like_dom"/>
</dbReference>
<dbReference type="InterPro" id="IPR036909">
    <property type="entry name" value="Cyt_c-like_dom_sf"/>
</dbReference>
<dbReference type="InterPro" id="IPR025710">
    <property type="entry name" value="SoxA"/>
</dbReference>
<dbReference type="NCBIfam" id="TIGR04484">
    <property type="entry name" value="thiosulf_SoxA"/>
    <property type="match status" value="1"/>
</dbReference>
<dbReference type="Pfam" id="PF21342">
    <property type="entry name" value="SoxA-TsdA_cyt-c"/>
    <property type="match status" value="2"/>
</dbReference>
<dbReference type="PIRSF" id="PIRSF038455">
    <property type="entry name" value="SoxA"/>
    <property type="match status" value="1"/>
</dbReference>
<dbReference type="SUPFAM" id="SSF46626">
    <property type="entry name" value="Cytochrome c"/>
    <property type="match status" value="2"/>
</dbReference>
<dbReference type="PROSITE" id="PS51007">
    <property type="entry name" value="CYTC"/>
    <property type="match status" value="1"/>
</dbReference>
<dbReference type="PROSITE" id="PS51008">
    <property type="entry name" value="MULTIHEME_CYTC"/>
    <property type="match status" value="1"/>
</dbReference>